<evidence type="ECO:0000255" key="1">
    <source>
        <dbReference type="HAMAP-Rule" id="MF_03140"/>
    </source>
</evidence>
<evidence type="ECO:0000256" key="2">
    <source>
        <dbReference type="SAM" id="MobiDB-lite"/>
    </source>
</evidence>
<name>FEN1_DEBHA</name>
<organism>
    <name type="scientific">Debaryomyces hansenii (strain ATCC 36239 / CBS 767 / BCRC 21394 / JCM 1990 / NBRC 0083 / IGC 2968)</name>
    <name type="common">Yeast</name>
    <name type="synonym">Torulaspora hansenii</name>
    <dbReference type="NCBI Taxonomy" id="284592"/>
    <lineage>
        <taxon>Eukaryota</taxon>
        <taxon>Fungi</taxon>
        <taxon>Dikarya</taxon>
        <taxon>Ascomycota</taxon>
        <taxon>Saccharomycotina</taxon>
        <taxon>Pichiomycetes</taxon>
        <taxon>Debaryomycetaceae</taxon>
        <taxon>Debaryomyces</taxon>
    </lineage>
</organism>
<feature type="chain" id="PRO_0000403575" description="Flap endonuclease 1">
    <location>
        <begin position="1"/>
        <end position="379"/>
    </location>
</feature>
<feature type="region of interest" description="N-domain">
    <location>
        <begin position="1"/>
        <end position="105"/>
    </location>
</feature>
<feature type="region of interest" description="I-domain">
    <location>
        <begin position="123"/>
        <end position="254"/>
    </location>
</feature>
<feature type="region of interest" description="Interaction with PCNA" evidence="1">
    <location>
        <begin position="341"/>
        <end position="349"/>
    </location>
</feature>
<feature type="region of interest" description="Disordered" evidence="2">
    <location>
        <begin position="344"/>
        <end position="379"/>
    </location>
</feature>
<feature type="compositionally biased region" description="Basic residues" evidence="2">
    <location>
        <begin position="361"/>
        <end position="379"/>
    </location>
</feature>
<feature type="binding site" evidence="1">
    <location>
        <position position="34"/>
    </location>
    <ligand>
        <name>Mg(2+)</name>
        <dbReference type="ChEBI" id="CHEBI:18420"/>
        <label>1</label>
    </ligand>
</feature>
<feature type="binding site" evidence="1">
    <location>
        <position position="47"/>
    </location>
    <ligand>
        <name>DNA</name>
        <dbReference type="ChEBI" id="CHEBI:16991"/>
    </ligand>
</feature>
<feature type="binding site" evidence="1">
    <location>
        <position position="71"/>
    </location>
    <ligand>
        <name>DNA</name>
        <dbReference type="ChEBI" id="CHEBI:16991"/>
    </ligand>
</feature>
<feature type="binding site" evidence="1">
    <location>
        <position position="87"/>
    </location>
    <ligand>
        <name>Mg(2+)</name>
        <dbReference type="ChEBI" id="CHEBI:18420"/>
        <label>1</label>
    </ligand>
</feature>
<feature type="binding site" evidence="1">
    <location>
        <position position="159"/>
    </location>
    <ligand>
        <name>DNA</name>
        <dbReference type="ChEBI" id="CHEBI:16991"/>
    </ligand>
</feature>
<feature type="binding site" evidence="1">
    <location>
        <position position="159"/>
    </location>
    <ligand>
        <name>Mg(2+)</name>
        <dbReference type="ChEBI" id="CHEBI:18420"/>
        <label>1</label>
    </ligand>
</feature>
<feature type="binding site" evidence="1">
    <location>
        <position position="161"/>
    </location>
    <ligand>
        <name>Mg(2+)</name>
        <dbReference type="ChEBI" id="CHEBI:18420"/>
        <label>1</label>
    </ligand>
</feature>
<feature type="binding site" evidence="1">
    <location>
        <position position="180"/>
    </location>
    <ligand>
        <name>Mg(2+)</name>
        <dbReference type="ChEBI" id="CHEBI:18420"/>
        <label>2</label>
    </ligand>
</feature>
<feature type="binding site" evidence="1">
    <location>
        <position position="182"/>
    </location>
    <ligand>
        <name>Mg(2+)</name>
        <dbReference type="ChEBI" id="CHEBI:18420"/>
        <label>2</label>
    </ligand>
</feature>
<feature type="binding site" evidence="1">
    <location>
        <position position="232"/>
    </location>
    <ligand>
        <name>DNA</name>
        <dbReference type="ChEBI" id="CHEBI:16991"/>
    </ligand>
</feature>
<feature type="binding site" evidence="1">
    <location>
        <position position="234"/>
    </location>
    <ligand>
        <name>DNA</name>
        <dbReference type="ChEBI" id="CHEBI:16991"/>
    </ligand>
</feature>
<feature type="binding site" evidence="1">
    <location>
        <position position="234"/>
    </location>
    <ligand>
        <name>Mg(2+)</name>
        <dbReference type="ChEBI" id="CHEBI:18420"/>
        <label>2</label>
    </ligand>
</feature>
<accession>Q6BLF4</accession>
<gene>
    <name evidence="1" type="primary">FEN1</name>
    <name type="ordered locus">DEHA2F13882g</name>
</gene>
<proteinExistence type="inferred from homology"/>
<keyword id="KW-0227">DNA damage</keyword>
<keyword id="KW-0234">DNA repair</keyword>
<keyword id="KW-0235">DNA replication</keyword>
<keyword id="KW-0255">Endonuclease</keyword>
<keyword id="KW-0269">Exonuclease</keyword>
<keyword id="KW-0378">Hydrolase</keyword>
<keyword id="KW-0460">Magnesium</keyword>
<keyword id="KW-0479">Metal-binding</keyword>
<keyword id="KW-0496">Mitochondrion</keyword>
<keyword id="KW-0540">Nuclease</keyword>
<keyword id="KW-0539">Nucleus</keyword>
<keyword id="KW-0597">Phosphoprotein</keyword>
<keyword id="KW-1185">Reference proteome</keyword>
<dbReference type="EC" id="3.1.-.-" evidence="1"/>
<dbReference type="EMBL" id="CR382138">
    <property type="protein sequence ID" value="CAG89325.2"/>
    <property type="molecule type" value="Genomic_DNA"/>
</dbReference>
<dbReference type="RefSeq" id="XP_460967.2">
    <property type="nucleotide sequence ID" value="XM_460967.1"/>
</dbReference>
<dbReference type="SMR" id="Q6BLF4"/>
<dbReference type="FunCoup" id="Q6BLF4">
    <property type="interactions" value="1097"/>
</dbReference>
<dbReference type="STRING" id="284592.Q6BLF4"/>
<dbReference type="GeneID" id="2904074"/>
<dbReference type="KEGG" id="dha:DEHA2F13882g"/>
<dbReference type="VEuPathDB" id="FungiDB:DEHA2F13882g"/>
<dbReference type="eggNOG" id="KOG2519">
    <property type="taxonomic scope" value="Eukaryota"/>
</dbReference>
<dbReference type="HOGENOM" id="CLU_032444_2_0_1"/>
<dbReference type="InParanoid" id="Q6BLF4"/>
<dbReference type="OMA" id="IQEVHID"/>
<dbReference type="OrthoDB" id="1937206at2759"/>
<dbReference type="Proteomes" id="UP000000599">
    <property type="component" value="Chromosome F"/>
</dbReference>
<dbReference type="GO" id="GO:0005739">
    <property type="term" value="C:mitochondrion"/>
    <property type="evidence" value="ECO:0007669"/>
    <property type="project" value="UniProtKB-SubCell"/>
</dbReference>
<dbReference type="GO" id="GO:0005730">
    <property type="term" value="C:nucleolus"/>
    <property type="evidence" value="ECO:0007669"/>
    <property type="project" value="UniProtKB-SubCell"/>
</dbReference>
<dbReference type="GO" id="GO:0005654">
    <property type="term" value="C:nucleoplasm"/>
    <property type="evidence" value="ECO:0007669"/>
    <property type="project" value="UniProtKB-SubCell"/>
</dbReference>
<dbReference type="GO" id="GO:0008409">
    <property type="term" value="F:5'-3' exonuclease activity"/>
    <property type="evidence" value="ECO:0007669"/>
    <property type="project" value="UniProtKB-UniRule"/>
</dbReference>
<dbReference type="GO" id="GO:0017108">
    <property type="term" value="F:5'-flap endonuclease activity"/>
    <property type="evidence" value="ECO:0007669"/>
    <property type="project" value="UniProtKB-UniRule"/>
</dbReference>
<dbReference type="GO" id="GO:0003677">
    <property type="term" value="F:DNA binding"/>
    <property type="evidence" value="ECO:0007669"/>
    <property type="project" value="UniProtKB-UniRule"/>
</dbReference>
<dbReference type="GO" id="GO:0000287">
    <property type="term" value="F:magnesium ion binding"/>
    <property type="evidence" value="ECO:0007669"/>
    <property type="project" value="UniProtKB-UniRule"/>
</dbReference>
<dbReference type="GO" id="GO:0006284">
    <property type="term" value="P:base-excision repair"/>
    <property type="evidence" value="ECO:0007669"/>
    <property type="project" value="UniProtKB-UniRule"/>
</dbReference>
<dbReference type="GO" id="GO:0043137">
    <property type="term" value="P:DNA replication, removal of RNA primer"/>
    <property type="evidence" value="ECO:0007669"/>
    <property type="project" value="UniProtKB-UniRule"/>
</dbReference>
<dbReference type="CDD" id="cd09907">
    <property type="entry name" value="H3TH_FEN1-Euk"/>
    <property type="match status" value="1"/>
</dbReference>
<dbReference type="CDD" id="cd09867">
    <property type="entry name" value="PIN_FEN1"/>
    <property type="match status" value="1"/>
</dbReference>
<dbReference type="FunFam" id="1.10.150.20:FF:000009">
    <property type="entry name" value="Flap endonuclease 1"/>
    <property type="match status" value="1"/>
</dbReference>
<dbReference type="FunFam" id="3.40.50.1010:FF:000003">
    <property type="entry name" value="Flap endonuclease 1"/>
    <property type="match status" value="1"/>
</dbReference>
<dbReference type="Gene3D" id="1.10.150.20">
    <property type="entry name" value="5' to 3' exonuclease, C-terminal subdomain"/>
    <property type="match status" value="1"/>
</dbReference>
<dbReference type="Gene3D" id="3.40.50.1010">
    <property type="entry name" value="5'-nuclease"/>
    <property type="match status" value="1"/>
</dbReference>
<dbReference type="HAMAP" id="MF_00614">
    <property type="entry name" value="Fen"/>
    <property type="match status" value="1"/>
</dbReference>
<dbReference type="InterPro" id="IPR036279">
    <property type="entry name" value="5-3_exonuclease_C_sf"/>
</dbReference>
<dbReference type="InterPro" id="IPR023426">
    <property type="entry name" value="Flap_endonuc"/>
</dbReference>
<dbReference type="InterPro" id="IPR008918">
    <property type="entry name" value="HhH2"/>
</dbReference>
<dbReference type="InterPro" id="IPR029060">
    <property type="entry name" value="PIN-like_dom_sf"/>
</dbReference>
<dbReference type="InterPro" id="IPR006086">
    <property type="entry name" value="XPG-I_dom"/>
</dbReference>
<dbReference type="InterPro" id="IPR006084">
    <property type="entry name" value="XPG/Rad2"/>
</dbReference>
<dbReference type="InterPro" id="IPR019974">
    <property type="entry name" value="XPG_CS"/>
</dbReference>
<dbReference type="InterPro" id="IPR006085">
    <property type="entry name" value="XPG_DNA_repair_N"/>
</dbReference>
<dbReference type="PANTHER" id="PTHR11081:SF9">
    <property type="entry name" value="FLAP ENDONUCLEASE 1"/>
    <property type="match status" value="1"/>
</dbReference>
<dbReference type="PANTHER" id="PTHR11081">
    <property type="entry name" value="FLAP ENDONUCLEASE FAMILY MEMBER"/>
    <property type="match status" value="1"/>
</dbReference>
<dbReference type="Pfam" id="PF00867">
    <property type="entry name" value="XPG_I"/>
    <property type="match status" value="1"/>
</dbReference>
<dbReference type="Pfam" id="PF00752">
    <property type="entry name" value="XPG_N"/>
    <property type="match status" value="1"/>
</dbReference>
<dbReference type="PRINTS" id="PR00853">
    <property type="entry name" value="XPGRADSUPER"/>
</dbReference>
<dbReference type="SMART" id="SM00279">
    <property type="entry name" value="HhH2"/>
    <property type="match status" value="1"/>
</dbReference>
<dbReference type="SMART" id="SM00484">
    <property type="entry name" value="XPGI"/>
    <property type="match status" value="1"/>
</dbReference>
<dbReference type="SMART" id="SM00485">
    <property type="entry name" value="XPGN"/>
    <property type="match status" value="1"/>
</dbReference>
<dbReference type="SUPFAM" id="SSF47807">
    <property type="entry name" value="5' to 3' exonuclease, C-terminal subdomain"/>
    <property type="match status" value="1"/>
</dbReference>
<dbReference type="SUPFAM" id="SSF88723">
    <property type="entry name" value="PIN domain-like"/>
    <property type="match status" value="1"/>
</dbReference>
<dbReference type="PROSITE" id="PS00841">
    <property type="entry name" value="XPG_1"/>
    <property type="match status" value="1"/>
</dbReference>
<dbReference type="PROSITE" id="PS00842">
    <property type="entry name" value="XPG_2"/>
    <property type="match status" value="1"/>
</dbReference>
<reference key="1">
    <citation type="journal article" date="2004" name="Nature">
        <title>Genome evolution in yeasts.</title>
        <authorList>
            <person name="Dujon B."/>
            <person name="Sherman D."/>
            <person name="Fischer G."/>
            <person name="Durrens P."/>
            <person name="Casaregola S."/>
            <person name="Lafontaine I."/>
            <person name="de Montigny J."/>
            <person name="Marck C."/>
            <person name="Neuveglise C."/>
            <person name="Talla E."/>
            <person name="Goffard N."/>
            <person name="Frangeul L."/>
            <person name="Aigle M."/>
            <person name="Anthouard V."/>
            <person name="Babour A."/>
            <person name="Barbe V."/>
            <person name="Barnay S."/>
            <person name="Blanchin S."/>
            <person name="Beckerich J.-M."/>
            <person name="Beyne E."/>
            <person name="Bleykasten C."/>
            <person name="Boisrame A."/>
            <person name="Boyer J."/>
            <person name="Cattolico L."/>
            <person name="Confanioleri F."/>
            <person name="de Daruvar A."/>
            <person name="Despons L."/>
            <person name="Fabre E."/>
            <person name="Fairhead C."/>
            <person name="Ferry-Dumazet H."/>
            <person name="Groppi A."/>
            <person name="Hantraye F."/>
            <person name="Hennequin C."/>
            <person name="Jauniaux N."/>
            <person name="Joyet P."/>
            <person name="Kachouri R."/>
            <person name="Kerrest A."/>
            <person name="Koszul R."/>
            <person name="Lemaire M."/>
            <person name="Lesur I."/>
            <person name="Ma L."/>
            <person name="Muller H."/>
            <person name="Nicaud J.-M."/>
            <person name="Nikolski M."/>
            <person name="Oztas S."/>
            <person name="Ozier-Kalogeropoulos O."/>
            <person name="Pellenz S."/>
            <person name="Potier S."/>
            <person name="Richard G.-F."/>
            <person name="Straub M.-L."/>
            <person name="Suleau A."/>
            <person name="Swennen D."/>
            <person name="Tekaia F."/>
            <person name="Wesolowski-Louvel M."/>
            <person name="Westhof E."/>
            <person name="Wirth B."/>
            <person name="Zeniou-Meyer M."/>
            <person name="Zivanovic Y."/>
            <person name="Bolotin-Fukuhara M."/>
            <person name="Thierry A."/>
            <person name="Bouchier C."/>
            <person name="Caudron B."/>
            <person name="Scarpelli C."/>
            <person name="Gaillardin C."/>
            <person name="Weissenbach J."/>
            <person name="Wincker P."/>
            <person name="Souciet J.-L."/>
        </authorList>
    </citation>
    <scope>NUCLEOTIDE SEQUENCE [LARGE SCALE GENOMIC DNA]</scope>
    <source>
        <strain>ATCC 36239 / CBS 767 / BCRC 21394 / JCM 1990 / NBRC 0083 / IGC 2968</strain>
    </source>
</reference>
<comment type="function">
    <text evidence="1">Structure-specific nuclease with 5'-flap endonuclease and 5'-3' exonuclease activities involved in DNA replication and repair. During DNA replication, cleaves the 5'-overhanging flap structure that is generated by displacement synthesis when DNA polymerase encounters the 5'-end of a downstream Okazaki fragment. It enters the flap from the 5'-end and then tracks to cleave the flap base, leaving a nick for ligation. Also involved in the long patch base excision repair (LP-BER) pathway, by cleaving within the apurinic/apyrimidinic (AP) site-terminated flap. Acts as a genome stabilization factor that prevents flaps from equilibrating into structures that lead to duplications and deletions. Also possesses 5'-3' exonuclease activity on nicked or gapped double-stranded DNA, and exhibits RNase H activity. Also involved in replication and repair of rDNA and in repairing mitochondrial DNA.</text>
</comment>
<comment type="cofactor">
    <cofactor evidence="1">
        <name>Mg(2+)</name>
        <dbReference type="ChEBI" id="CHEBI:18420"/>
    </cofactor>
    <text evidence="1">Binds 2 magnesium ions per subunit. They probably participate in the reaction catalyzed by the enzyme. May bind an additional third magnesium ion after substrate binding.</text>
</comment>
<comment type="subunit">
    <text evidence="1">Interacts with PCNA. Three molecules of FEN1 bind to one PCNA trimer with each molecule binding to one PCNA monomer. PCNA stimulates the nuclease activity without altering cleavage specificity.</text>
</comment>
<comment type="subcellular location">
    <subcellularLocation>
        <location evidence="1">Nucleus</location>
        <location evidence="1">Nucleolus</location>
    </subcellularLocation>
    <subcellularLocation>
        <location evidence="1">Nucleus</location>
        <location evidence="1">Nucleoplasm</location>
    </subcellularLocation>
    <subcellularLocation>
        <location evidence="1">Mitochondrion</location>
    </subcellularLocation>
    <text evidence="1">Resides mostly in the nucleoli and relocalizes to the nucleoplasm upon DNA damage.</text>
</comment>
<comment type="PTM">
    <text evidence="1">Phosphorylated. Phosphorylation upon DNA damage induces relocalization to the nuclear plasma.</text>
</comment>
<comment type="similarity">
    <text evidence="1">Belongs to the XPG/RAD2 endonuclease family. FEN1 subfamily.</text>
</comment>
<protein>
    <recommendedName>
        <fullName evidence="1">Flap endonuclease 1</fullName>
        <shortName evidence="1">FEN-1</shortName>
        <ecNumber evidence="1">3.1.-.-</ecNumber>
    </recommendedName>
    <alternativeName>
        <fullName evidence="1">Flap structure-specific endonuclease 1</fullName>
    </alternativeName>
</protein>
<sequence length="379" mass="43238">MGVKGLNQLIKEHAPEAFKEFQLKNLFGRKIAIDASMCLYQFLIAVRQAEGQQLTNDEGETTSHLSGMFYRTIRLVENSIKPVYVFDGKPPVLKGGELEKRLLRREEAIKQRENIKDEGTIEDMVRYEKRTVRVTREQNDEAKKLLELMGVPYVNAPCEAEAQCAELARGGKVFAAASEDMDTICYQPPFLLRHLTFSEARKMPIDQIQYEKVLEALEMDRETFIDLCILLGCDYCETIRGVGPVTAFKLIKEHGSLDKIVEYLTNNPDKTNFKVPEDWPYDEARKLFINPDTIDASEVNLKWKEPDVEGLIQYMVKEKGFSEDRIRSGAEKLKKGLKGGVQGRLDGFFQSVPKPKDSADKKRKNDTKSAKSKKAKTRK</sequence>